<comment type="function">
    <text evidence="1">RNA chaperone that binds small regulatory RNA (sRNAs) and mRNAs to facilitate mRNA translational regulation in response to envelope stress, environmental stress and changes in metabolite concentrations. Also binds with high specificity to tRNAs.</text>
</comment>
<comment type="subunit">
    <text evidence="1">Homohexamer.</text>
</comment>
<comment type="similarity">
    <text evidence="1">Belongs to the Hfq family.</text>
</comment>
<keyword id="KW-0694">RNA-binding</keyword>
<keyword id="KW-0346">Stress response</keyword>
<accession>A5I9G0</accession>
<organism>
    <name type="scientific">Legionella pneumophila (strain Corby)</name>
    <dbReference type="NCBI Taxonomy" id="400673"/>
    <lineage>
        <taxon>Bacteria</taxon>
        <taxon>Pseudomonadati</taxon>
        <taxon>Pseudomonadota</taxon>
        <taxon>Gammaproteobacteria</taxon>
        <taxon>Legionellales</taxon>
        <taxon>Legionellaceae</taxon>
        <taxon>Legionella</taxon>
    </lineage>
</organism>
<feature type="chain" id="PRO_1000025917" description="RNA-binding protein Hfq">
    <location>
        <begin position="1"/>
        <end position="85"/>
    </location>
</feature>
<feature type="domain" description="Sm" evidence="2">
    <location>
        <begin position="9"/>
        <end position="68"/>
    </location>
</feature>
<proteinExistence type="inferred from homology"/>
<name>HFQ_LEGPC</name>
<dbReference type="EMBL" id="CP000675">
    <property type="protein sequence ID" value="ABQ54010.1"/>
    <property type="molecule type" value="Genomic_DNA"/>
</dbReference>
<dbReference type="RefSeq" id="WP_010945771.1">
    <property type="nucleotide sequence ID" value="NZ_JAPMSS010000003.1"/>
</dbReference>
<dbReference type="SMR" id="A5I9G0"/>
<dbReference type="GeneID" id="57034015"/>
<dbReference type="KEGG" id="lpc:LPC_0010"/>
<dbReference type="HOGENOM" id="CLU_113688_2_2_6"/>
<dbReference type="GO" id="GO:0005829">
    <property type="term" value="C:cytosol"/>
    <property type="evidence" value="ECO:0007669"/>
    <property type="project" value="TreeGrafter"/>
</dbReference>
<dbReference type="GO" id="GO:0003723">
    <property type="term" value="F:RNA binding"/>
    <property type="evidence" value="ECO:0007669"/>
    <property type="project" value="UniProtKB-UniRule"/>
</dbReference>
<dbReference type="GO" id="GO:0006355">
    <property type="term" value="P:regulation of DNA-templated transcription"/>
    <property type="evidence" value="ECO:0007669"/>
    <property type="project" value="InterPro"/>
</dbReference>
<dbReference type="GO" id="GO:0043487">
    <property type="term" value="P:regulation of RNA stability"/>
    <property type="evidence" value="ECO:0007669"/>
    <property type="project" value="TreeGrafter"/>
</dbReference>
<dbReference type="GO" id="GO:0045974">
    <property type="term" value="P:regulation of translation, ncRNA-mediated"/>
    <property type="evidence" value="ECO:0007669"/>
    <property type="project" value="TreeGrafter"/>
</dbReference>
<dbReference type="CDD" id="cd01716">
    <property type="entry name" value="Hfq"/>
    <property type="match status" value="1"/>
</dbReference>
<dbReference type="FunFam" id="2.30.30.100:FF:000001">
    <property type="entry name" value="RNA-binding protein Hfq"/>
    <property type="match status" value="1"/>
</dbReference>
<dbReference type="Gene3D" id="2.30.30.100">
    <property type="match status" value="1"/>
</dbReference>
<dbReference type="HAMAP" id="MF_00436">
    <property type="entry name" value="Hfq"/>
    <property type="match status" value="1"/>
</dbReference>
<dbReference type="InterPro" id="IPR005001">
    <property type="entry name" value="Hfq"/>
</dbReference>
<dbReference type="InterPro" id="IPR010920">
    <property type="entry name" value="LSM_dom_sf"/>
</dbReference>
<dbReference type="InterPro" id="IPR047575">
    <property type="entry name" value="Sm"/>
</dbReference>
<dbReference type="NCBIfam" id="TIGR02383">
    <property type="entry name" value="Hfq"/>
    <property type="match status" value="1"/>
</dbReference>
<dbReference type="NCBIfam" id="NF001602">
    <property type="entry name" value="PRK00395.1"/>
    <property type="match status" value="1"/>
</dbReference>
<dbReference type="PANTHER" id="PTHR34772">
    <property type="entry name" value="RNA-BINDING PROTEIN HFQ"/>
    <property type="match status" value="1"/>
</dbReference>
<dbReference type="PANTHER" id="PTHR34772:SF1">
    <property type="entry name" value="RNA-BINDING PROTEIN HFQ"/>
    <property type="match status" value="1"/>
</dbReference>
<dbReference type="Pfam" id="PF17209">
    <property type="entry name" value="Hfq"/>
    <property type="match status" value="1"/>
</dbReference>
<dbReference type="SUPFAM" id="SSF50182">
    <property type="entry name" value="Sm-like ribonucleoproteins"/>
    <property type="match status" value="1"/>
</dbReference>
<dbReference type="PROSITE" id="PS52002">
    <property type="entry name" value="SM"/>
    <property type="match status" value="1"/>
</dbReference>
<sequence length="85" mass="9528">MSKNHLLQDPFLNELRKEKVPVSVFLVNGIKLHGIIDSFDQYVVMLKNSITQMVYKHAISTVVPSRMVKIPAEESSGEEEGTVAD</sequence>
<reference key="1">
    <citation type="submission" date="2006-11" db="EMBL/GenBank/DDBJ databases">
        <title>Identification and characterization of a new conjugation/ type IVA secretion system (trb/tra) of L. pneumophila Corby localized on a mobile genomic island.</title>
        <authorList>
            <person name="Gloeckner G."/>
            <person name="Albert-Weissenberger C."/>
            <person name="Weinmann E."/>
            <person name="Jacobi S."/>
            <person name="Schunder E."/>
            <person name="Steinert M."/>
            <person name="Buchrieser C."/>
            <person name="Hacker J."/>
            <person name="Heuner K."/>
        </authorList>
    </citation>
    <scope>NUCLEOTIDE SEQUENCE [LARGE SCALE GENOMIC DNA]</scope>
    <source>
        <strain>Corby</strain>
    </source>
</reference>
<gene>
    <name evidence="1" type="primary">hfq</name>
    <name type="ordered locus">LPC_0010</name>
</gene>
<evidence type="ECO:0000255" key="1">
    <source>
        <dbReference type="HAMAP-Rule" id="MF_00436"/>
    </source>
</evidence>
<evidence type="ECO:0000255" key="2">
    <source>
        <dbReference type="PROSITE-ProRule" id="PRU01346"/>
    </source>
</evidence>
<protein>
    <recommendedName>
        <fullName evidence="1">RNA-binding protein Hfq</fullName>
    </recommendedName>
</protein>